<evidence type="ECO:0000255" key="1">
    <source>
        <dbReference type="HAMAP-Rule" id="MF_00802"/>
    </source>
</evidence>
<name>GLNE_ALTMD</name>
<proteinExistence type="inferred from homology"/>
<accession>B4RTA0</accession>
<accession>F2G7H4</accession>
<gene>
    <name evidence="1" type="primary">glnE</name>
    <name type="ordered locus">MADE_1007420</name>
</gene>
<feature type="chain" id="PRO_1000133895" description="Bifunctional glutamine synthetase adenylyltransferase/adenylyl-removing enzyme">
    <location>
        <begin position="1"/>
        <end position="990"/>
    </location>
</feature>
<feature type="region of interest" description="Adenylyl removase" evidence="1">
    <location>
        <begin position="1"/>
        <end position="474"/>
    </location>
</feature>
<feature type="region of interest" description="Adenylyl transferase" evidence="1">
    <location>
        <begin position="484"/>
        <end position="990"/>
    </location>
</feature>
<dbReference type="EC" id="2.7.7.89" evidence="1"/>
<dbReference type="EC" id="2.7.7.42" evidence="1"/>
<dbReference type="EMBL" id="CP001103">
    <property type="protein sequence ID" value="AEA97624.1"/>
    <property type="molecule type" value="Genomic_DNA"/>
</dbReference>
<dbReference type="RefSeq" id="WP_012517964.1">
    <property type="nucleotide sequence ID" value="NC_011138.3"/>
</dbReference>
<dbReference type="SMR" id="B4RTA0"/>
<dbReference type="KEGG" id="amc:MADE_1007420"/>
<dbReference type="HOGENOM" id="CLU_006233_0_1_6"/>
<dbReference type="Proteomes" id="UP000001870">
    <property type="component" value="Chromosome"/>
</dbReference>
<dbReference type="GO" id="GO:0005829">
    <property type="term" value="C:cytosol"/>
    <property type="evidence" value="ECO:0007669"/>
    <property type="project" value="TreeGrafter"/>
</dbReference>
<dbReference type="GO" id="GO:0008882">
    <property type="term" value="F:[glutamate-ammonia-ligase] adenylyltransferase activity"/>
    <property type="evidence" value="ECO:0007669"/>
    <property type="project" value="UniProtKB-UniRule"/>
</dbReference>
<dbReference type="GO" id="GO:0047388">
    <property type="term" value="F:[glutamine synthetase]-adenylyl-L-tyrosine phosphorylase activity"/>
    <property type="evidence" value="ECO:0007669"/>
    <property type="project" value="UniProtKB-EC"/>
</dbReference>
<dbReference type="GO" id="GO:0005524">
    <property type="term" value="F:ATP binding"/>
    <property type="evidence" value="ECO:0007669"/>
    <property type="project" value="UniProtKB-UniRule"/>
</dbReference>
<dbReference type="GO" id="GO:0000287">
    <property type="term" value="F:magnesium ion binding"/>
    <property type="evidence" value="ECO:0007669"/>
    <property type="project" value="UniProtKB-UniRule"/>
</dbReference>
<dbReference type="GO" id="GO:0000820">
    <property type="term" value="P:regulation of glutamine family amino acid metabolic process"/>
    <property type="evidence" value="ECO:0007669"/>
    <property type="project" value="UniProtKB-UniRule"/>
</dbReference>
<dbReference type="CDD" id="cd05401">
    <property type="entry name" value="NT_GlnE_GlnD_like"/>
    <property type="match status" value="2"/>
</dbReference>
<dbReference type="FunFam" id="1.20.120.330:FF:000005">
    <property type="entry name" value="Bifunctional glutamine synthetase adenylyltransferase/adenylyl-removing enzyme"/>
    <property type="match status" value="1"/>
</dbReference>
<dbReference type="FunFam" id="3.30.460.10:FF:000009">
    <property type="entry name" value="Bifunctional glutamine synthetase adenylyltransferase/adenylyl-removing enzyme"/>
    <property type="match status" value="1"/>
</dbReference>
<dbReference type="Gene3D" id="1.20.120.1510">
    <property type="match status" value="1"/>
</dbReference>
<dbReference type="Gene3D" id="3.30.460.10">
    <property type="entry name" value="Beta Polymerase, domain 2"/>
    <property type="match status" value="2"/>
</dbReference>
<dbReference type="Gene3D" id="1.20.120.330">
    <property type="entry name" value="Nucleotidyltransferases domain 2"/>
    <property type="match status" value="2"/>
</dbReference>
<dbReference type="HAMAP" id="MF_00802">
    <property type="entry name" value="GlnE"/>
    <property type="match status" value="1"/>
</dbReference>
<dbReference type="InterPro" id="IPR023057">
    <property type="entry name" value="GlnE"/>
</dbReference>
<dbReference type="InterPro" id="IPR005190">
    <property type="entry name" value="GlnE_rpt_dom"/>
</dbReference>
<dbReference type="InterPro" id="IPR043519">
    <property type="entry name" value="NT_sf"/>
</dbReference>
<dbReference type="InterPro" id="IPR013546">
    <property type="entry name" value="PII_UdlTrfase/GS_AdlTrfase"/>
</dbReference>
<dbReference type="NCBIfam" id="NF008292">
    <property type="entry name" value="PRK11072.1"/>
    <property type="match status" value="1"/>
</dbReference>
<dbReference type="PANTHER" id="PTHR30621:SF0">
    <property type="entry name" value="BIFUNCTIONAL GLUTAMINE SYNTHETASE ADENYLYLTRANSFERASE_ADENYLYL-REMOVING ENZYME"/>
    <property type="match status" value="1"/>
</dbReference>
<dbReference type="PANTHER" id="PTHR30621">
    <property type="entry name" value="GLUTAMINE SYNTHETASE ADENYLYLTRANSFERASE"/>
    <property type="match status" value="1"/>
</dbReference>
<dbReference type="Pfam" id="PF08335">
    <property type="entry name" value="GlnD_UR_UTase"/>
    <property type="match status" value="2"/>
</dbReference>
<dbReference type="Pfam" id="PF03710">
    <property type="entry name" value="GlnE"/>
    <property type="match status" value="2"/>
</dbReference>
<dbReference type="SUPFAM" id="SSF81301">
    <property type="entry name" value="Nucleotidyltransferase"/>
    <property type="match status" value="2"/>
</dbReference>
<dbReference type="SUPFAM" id="SSF81593">
    <property type="entry name" value="Nucleotidyltransferase substrate binding subunit/domain"/>
    <property type="match status" value="2"/>
</dbReference>
<comment type="function">
    <text evidence="1">Involved in the regulation of glutamine synthetase GlnA, a key enzyme in the process to assimilate ammonia. When cellular nitrogen levels are high, the C-terminal adenylyl transferase (AT) inactivates GlnA by covalent transfer of an adenylyl group from ATP to specific tyrosine residue of GlnA, thus reducing its activity. Conversely, when nitrogen levels are low, the N-terminal adenylyl removase (AR) activates GlnA by removing the adenylyl group by phosphorolysis, increasing its activity. The regulatory region of GlnE binds the signal transduction protein PII (GlnB) which indicates the nitrogen status of the cell.</text>
</comment>
<comment type="catalytic activity">
    <reaction evidence="1">
        <text>[glutamine synthetase]-O(4)-(5'-adenylyl)-L-tyrosine + phosphate = [glutamine synthetase]-L-tyrosine + ADP</text>
        <dbReference type="Rhea" id="RHEA:43716"/>
        <dbReference type="Rhea" id="RHEA-COMP:10660"/>
        <dbReference type="Rhea" id="RHEA-COMP:10661"/>
        <dbReference type="ChEBI" id="CHEBI:43474"/>
        <dbReference type="ChEBI" id="CHEBI:46858"/>
        <dbReference type="ChEBI" id="CHEBI:83624"/>
        <dbReference type="ChEBI" id="CHEBI:456216"/>
        <dbReference type="EC" id="2.7.7.89"/>
    </reaction>
</comment>
<comment type="catalytic activity">
    <reaction evidence="1">
        <text>[glutamine synthetase]-L-tyrosine + ATP = [glutamine synthetase]-O(4)-(5'-adenylyl)-L-tyrosine + diphosphate</text>
        <dbReference type="Rhea" id="RHEA:18589"/>
        <dbReference type="Rhea" id="RHEA-COMP:10660"/>
        <dbReference type="Rhea" id="RHEA-COMP:10661"/>
        <dbReference type="ChEBI" id="CHEBI:30616"/>
        <dbReference type="ChEBI" id="CHEBI:33019"/>
        <dbReference type="ChEBI" id="CHEBI:46858"/>
        <dbReference type="ChEBI" id="CHEBI:83624"/>
        <dbReference type="EC" id="2.7.7.42"/>
    </reaction>
</comment>
<comment type="cofactor">
    <cofactor evidence="1">
        <name>Mg(2+)</name>
        <dbReference type="ChEBI" id="CHEBI:18420"/>
    </cofactor>
</comment>
<comment type="similarity">
    <text evidence="1">Belongs to the GlnE family.</text>
</comment>
<organism>
    <name type="scientific">Alteromonas mediterranea (strain DSM 17117 / CIP 110805 / LMG 28347 / Deep ecotype)</name>
    <dbReference type="NCBI Taxonomy" id="1774373"/>
    <lineage>
        <taxon>Bacteria</taxon>
        <taxon>Pseudomonadati</taxon>
        <taxon>Pseudomonadota</taxon>
        <taxon>Gammaproteobacteria</taxon>
        <taxon>Alteromonadales</taxon>
        <taxon>Alteromonadaceae</taxon>
        <taxon>Alteromonas/Salinimonas group</taxon>
        <taxon>Alteromonas</taxon>
    </lineage>
</organism>
<keyword id="KW-0067">ATP-binding</keyword>
<keyword id="KW-0460">Magnesium</keyword>
<keyword id="KW-0511">Multifunctional enzyme</keyword>
<keyword id="KW-0547">Nucleotide-binding</keyword>
<keyword id="KW-0548">Nucleotidyltransferase</keyword>
<keyword id="KW-0808">Transferase</keyword>
<protein>
    <recommendedName>
        <fullName evidence="1">Bifunctional glutamine synthetase adenylyltransferase/adenylyl-removing enzyme</fullName>
    </recommendedName>
    <alternativeName>
        <fullName evidence="1">ATP:glutamine synthetase adenylyltransferase</fullName>
    </alternativeName>
    <alternativeName>
        <fullName evidence="1">ATase</fullName>
    </alternativeName>
    <domain>
        <recommendedName>
            <fullName evidence="1">Glutamine synthetase adenylyl-L-tyrosine phosphorylase</fullName>
            <ecNumber evidence="1">2.7.7.89</ecNumber>
        </recommendedName>
        <alternativeName>
            <fullName evidence="1">Adenylyl removase</fullName>
            <shortName evidence="1">AR</shortName>
            <shortName evidence="1">AT-N</shortName>
        </alternativeName>
    </domain>
    <domain>
        <recommendedName>
            <fullName evidence="1">Glutamine synthetase adenylyl transferase</fullName>
            <ecNumber evidence="1">2.7.7.42</ecNumber>
        </recommendedName>
        <alternativeName>
            <fullName evidence="1">Adenylyl transferase</fullName>
            <shortName evidence="1">AT</shortName>
            <shortName evidence="1">AT-C</shortName>
        </alternativeName>
    </domain>
</protein>
<reference key="1">
    <citation type="journal article" date="2008" name="ISME J.">
        <title>Comparative genomics of two ecotypes of the marine planktonic copiotroph Alteromonas macleodii suggests alternative lifestyles associated with different kinds of particulate organic matter.</title>
        <authorList>
            <person name="Ivars-Martinez E."/>
            <person name="Martin-Cuadrado A.-B."/>
            <person name="D'Auria G."/>
            <person name="Mira A."/>
            <person name="Ferriera S."/>
            <person name="Johnson J."/>
            <person name="Friedman R."/>
            <person name="Rodriguez-Valera F."/>
        </authorList>
    </citation>
    <scope>NUCLEOTIDE SEQUENCE [LARGE SCALE GENOMIC DNA]</scope>
    <source>
        <strain>DSM 17117 / CIP 110805 / LMG 28347 / Deep ecotype</strain>
    </source>
</reference>
<sequence length="990" mass="113727">MPTDNENSMTNVEQAEKYWQQFLTAPALTDDDKAIAKQHHDVLLTAFARSSFLAETIIQKPSFVSRTVEQTVEQTVEQTTEQDSDEQLQKNVDKEASSPWVAMYRSALDITLETVKTEDDLLKALREYRNQEMARVTFLDVLNKQDISTSLERVSALADVLLTGAYHWIYQHLAIRYGTPQNNGEDMHMYILGMGKLGGKELNFSSDIDLIFSYPEKGETQGGRKSIEHQQFFTKLAQKLIQALNKITNDGQVYRVDMRLRPFGDSGPLVMHFAALEDYYQDQGRHWERFAMVKARVINDDNSEDVKWLNSILHPFTFRRYLDFTTLDALRNMKKLIATEIRRRRLNNNIKLGAGGIREVEFFAQSFQLIHGGREPALQSKSLLRTLDALTELDIVEKDVTEQLKHDYLFLRKVEHTLQQCQDRQTQTLPDSAWQQAALIEVMGFDSYSTFLNQLDATMARIHGHFNELVEESQDSHSDEDQLFIACQDAWRLSLQEEEFAETFSEHLSSKDITGVYPILVAFKDKQRNYRIGQKGEDTLNKLLPEILYVLINQHPNHISQVLKRLLGVIEAITGRTTYLDLLLENPDVLKQLVKLCERSDWIAQEIKRFPLLLDELLTPLYLGQQNTDIHTSKKEYQLELRETMLRIEQDDVEMLMDGLRQFKLCQQLRIAASDISESLPVNNVSDKLTVLAEVILEHVVNAAWMQMRQRYGVPSHLEGNDKGFAVIGYGKLGGYELGYGSDLDLVFLHNAPRGISTDGNKSLEAQQFYIKLAQRIMHLLNTKTLFGQLYETDLRLRPSGNAGLLCCHIDGFEKYQTEEAWTWEHQALVRARAICGDVGLLKDFTRVRHTILSQVRDSKSLATDVCKMRLKMREHLLSKNNDKVDLKQCVGGITDIEFMAQYLVLANAQSADSMTTYPDNLRIFDTAVKARIIDPSTASKLQKAYLKLREQYHHLTLADTKYADQSEELDAIREQVRQHWDTLFGTCSE</sequence>